<protein>
    <recommendedName>
        <fullName evidence="1">Non-structural protein 5</fullName>
        <shortName evidence="1">NSP5</shortName>
    </recommendedName>
    <alternativeName>
        <fullName evidence="1">NS26</fullName>
    </alternativeName>
</protein>
<feature type="chain" id="PRO_0000369495" description="Non-structural protein 5">
    <location>
        <begin position="1"/>
        <end position="198"/>
    </location>
</feature>
<feature type="region of interest" description="Disordered" evidence="2">
    <location>
        <begin position="17"/>
        <end position="36"/>
    </location>
</feature>
<feature type="region of interest" description="Disordered" evidence="2">
    <location>
        <begin position="53"/>
        <end position="73"/>
    </location>
</feature>
<feature type="region of interest" description="Disordered" evidence="2">
    <location>
        <begin position="129"/>
        <end position="167"/>
    </location>
</feature>
<feature type="compositionally biased region" description="Low complexity" evidence="2">
    <location>
        <begin position="17"/>
        <end position="30"/>
    </location>
</feature>
<feature type="compositionally biased region" description="Polar residues" evidence="2">
    <location>
        <begin position="64"/>
        <end position="73"/>
    </location>
</feature>
<feature type="compositionally biased region" description="Acidic residues" evidence="2">
    <location>
        <begin position="153"/>
        <end position="166"/>
    </location>
</feature>
<feature type="binding site" evidence="1">
    <location>
        <position position="92"/>
    </location>
    <ligand>
        <name>Mg(2+)</name>
        <dbReference type="ChEBI" id="CHEBI:18420"/>
    </ligand>
</feature>
<feature type="modified residue" description="Phosphoserine; by host CK1" evidence="1">
    <location>
        <position position="67"/>
    </location>
</feature>
<feature type="modified residue" description="Phosphoserine; by host" evidence="1">
    <location>
        <position position="154"/>
    </location>
</feature>
<feature type="modified residue" description="Phosphoserine; by host" evidence="1">
    <location>
        <position position="156"/>
    </location>
</feature>
<feature type="modified residue" description="Phosphoserine; by host" evidence="1">
    <location>
        <position position="164"/>
    </location>
</feature>
<feature type="modified residue" description="Phosphoserine; by host" evidence="1">
    <location>
        <position position="166"/>
    </location>
</feature>
<reference key="1">
    <citation type="journal article" date="2006" name="J. Virol.">
        <title>Full genomic analysis of human rotavirus strain B4106 and lapine rotavirus strain 30/96 provides evidence for interspecies transmission.</title>
        <authorList>
            <person name="Matthijnssens J."/>
            <person name="Rahman M."/>
            <person name="Martella V."/>
            <person name="Xuelei Y."/>
            <person name="De Vos S."/>
            <person name="De Leener K."/>
            <person name="Ciarlet M."/>
            <person name="Buonavoglia C."/>
            <person name="Van Ranst M."/>
        </authorList>
    </citation>
    <scope>NUCLEOTIDE SEQUENCE [GENOMIC RNA]</scope>
</reference>
<evidence type="ECO:0000255" key="1">
    <source>
        <dbReference type="HAMAP-Rule" id="MF_04092"/>
    </source>
</evidence>
<evidence type="ECO:0000256" key="2">
    <source>
        <dbReference type="SAM" id="MobiDB-lite"/>
    </source>
</evidence>
<dbReference type="EMBL" id="AY740731">
    <property type="protein sequence ID" value="AAU43789.1"/>
    <property type="molecule type" value="Genomic_RNA"/>
</dbReference>
<dbReference type="SMR" id="Q3ZK65"/>
<dbReference type="Proteomes" id="UP000008655">
    <property type="component" value="Genome"/>
</dbReference>
<dbReference type="GO" id="GO:0030430">
    <property type="term" value="C:host cell cytoplasm"/>
    <property type="evidence" value="ECO:0007669"/>
    <property type="project" value="UniProtKB-SubCell"/>
</dbReference>
<dbReference type="GO" id="GO:0016887">
    <property type="term" value="F:ATP hydrolysis activity"/>
    <property type="evidence" value="ECO:0007669"/>
    <property type="project" value="UniProtKB-UniRule"/>
</dbReference>
<dbReference type="GO" id="GO:0000287">
    <property type="term" value="F:magnesium ion binding"/>
    <property type="evidence" value="ECO:0007669"/>
    <property type="project" value="UniProtKB-UniRule"/>
</dbReference>
<dbReference type="GO" id="GO:0000166">
    <property type="term" value="F:nucleotide binding"/>
    <property type="evidence" value="ECO:0007669"/>
    <property type="project" value="UniProtKB-UniRule"/>
</dbReference>
<dbReference type="GO" id="GO:0003723">
    <property type="term" value="F:RNA binding"/>
    <property type="evidence" value="ECO:0007669"/>
    <property type="project" value="UniProtKB-UniRule"/>
</dbReference>
<dbReference type="GO" id="GO:0019079">
    <property type="term" value="P:viral genome replication"/>
    <property type="evidence" value="ECO:0007669"/>
    <property type="project" value="UniProtKB-UniRule"/>
</dbReference>
<dbReference type="HAMAP" id="MF_04092">
    <property type="entry name" value="ROTA_NSP5"/>
    <property type="match status" value="1"/>
</dbReference>
<dbReference type="InterPro" id="IPR002512">
    <property type="entry name" value="Rotavirus_A/C_NSP5"/>
</dbReference>
<dbReference type="Pfam" id="PF01525">
    <property type="entry name" value="Rota_NS26"/>
    <property type="match status" value="1"/>
</dbReference>
<dbReference type="PIRSF" id="PIRSF004006">
    <property type="entry name" value="Rota_NS26"/>
    <property type="match status" value="1"/>
</dbReference>
<organism>
    <name type="scientific">Rotavirus A (isolate RVA/Human/Belgium/B4106/2000/G3P11[14])</name>
    <name type="common">RV-A</name>
    <name type="synonym">Rotavirus A (isolate B4106)</name>
    <dbReference type="NCBI Taxonomy" id="578843"/>
    <lineage>
        <taxon>Viruses</taxon>
        <taxon>Riboviria</taxon>
        <taxon>Orthornavirae</taxon>
        <taxon>Duplornaviricota</taxon>
        <taxon>Resentoviricetes</taxon>
        <taxon>Reovirales</taxon>
        <taxon>Sedoreoviridae</taxon>
        <taxon>Rotavirus</taxon>
        <taxon>Rotavirus A</taxon>
    </lineage>
</organism>
<accession>Q3ZK65</accession>
<name>NSP5_ROT41</name>
<keyword id="KW-0325">Glycoprotein</keyword>
<keyword id="KW-1035">Host cytoplasm</keyword>
<keyword id="KW-0460">Magnesium</keyword>
<keyword id="KW-0479">Metal-binding</keyword>
<keyword id="KW-0547">Nucleotide-binding</keyword>
<keyword id="KW-0597">Phosphoprotein</keyword>
<keyword id="KW-0694">RNA-binding</keyword>
<comment type="function">
    <text evidence="1">Plays an essential role in the viral genome replication. Participates, together with NSP2, in the formation of viral factories (viroplasms), which are large inclusions in the host cytoplasm where replication intermediates are assembled and viral RNA replication takes place. Orchestrates the recruitment of viroplasmic proteins such as capsid proteins to these factories. Participates in the selective exclusion of host proteins from stress granules (SG) and P bodies (PB). Also participates in the sequestration of these remodeled organelles in viral factories.</text>
</comment>
<comment type="cofactor">
    <cofactor evidence="1">
        <name>Mg(2+)</name>
        <dbReference type="ChEBI" id="CHEBI:18420"/>
    </cofactor>
</comment>
<comment type="subunit">
    <text evidence="1">Homodimer. Interacts with VP1. Interacts with VP2. Interacts with NSP2; this interaction leads to up-regulation of NSP5 hyperphosphorylation and formation of virus factories. Interacts with NSP6. Participates in the selective exclusion of host proteins from stress granules (SG) and P bodies (PB). Also participates in the sequestration of these remodeled organelles in viral factories.</text>
</comment>
<comment type="subcellular location">
    <subcellularLocation>
        <location evidence="1">Host cytoplasm</location>
    </subcellularLocation>
    <text evidence="1">Found in spherical cytoplasmic structures, called virus factories, that appear early after infection and are the site of viral replication and packaging.</text>
</comment>
<comment type="PTM">
    <text evidence="1">O-glycosylated.</text>
</comment>
<comment type="PTM">
    <text evidence="1">Hyperphosphorylated on serine residues, when in dimeric form. Phosphorylation by host CK1 is required for the hyperphosphorylation of NSP5 dimer.</text>
</comment>
<comment type="similarity">
    <text evidence="1">Belongs to the rotavirus NSP5 family.</text>
</comment>
<organismHost>
    <name type="scientific">Homo sapiens</name>
    <name type="common">Human</name>
    <dbReference type="NCBI Taxonomy" id="9606"/>
</organismHost>
<proteinExistence type="inferred from homology"/>
<sequence>MSLSIDVTSLPSISSSIFKNESSSTTSTLSGKSIGRNELYVSPDAEAFNKYMLSKSPEDIGPSDSASNDPLTSFSIRSHAVKTNADAGVSMDSSTQSRPSSNVGCDQVDFSFNKAVKVNANLDSSISISTDQKREKSKKDHKNGKHYPKIEAESDSDDYVLDDSDSDDGKCKNCKYKRKYFALRMRMKHVAMQLIEDL</sequence>